<name>DSBE_ALLVD</name>
<gene>
    <name type="primary">dsbE</name>
    <name type="synonym">ccmG</name>
    <name type="ordered locus">Alvin_2180</name>
</gene>
<proteinExistence type="inferred from homology"/>
<sequence length="181" mass="20244">MNTSAKRALIPLGIFLALAALLFYGLQLDPRKIPSPLVDKPAPEFSLPDLKDPNQTLTRDILIGQVSLVNVWASWCPSCRQEHAELMRIAREHGVRVIGFNWKDTRPEALAMLQRYGDPYTVSLYDPDNKAGIDWGVYGAPETFIVDAEGIIRHKRVGPIDAQVWAEEIQPIVARYQGGKP</sequence>
<feature type="chain" id="PRO_0000201292" description="Thiol:disulfide interchange protein DsbE">
    <location>
        <begin position="1"/>
        <end position="181"/>
    </location>
</feature>
<feature type="topological domain" description="Cytoplasmic" evidence="2">
    <location>
        <begin position="1"/>
        <end position="6"/>
    </location>
</feature>
<feature type="transmembrane region" description="Helical" evidence="2">
    <location>
        <begin position="7"/>
        <end position="26"/>
    </location>
</feature>
<feature type="topological domain" description="Periplasmic" evidence="2">
    <location>
        <begin position="27"/>
        <end position="181"/>
    </location>
</feature>
<feature type="domain" description="Thioredoxin" evidence="3">
    <location>
        <begin position="36"/>
        <end position="178"/>
    </location>
</feature>
<feature type="disulfide bond" description="Redox-active" evidence="3">
    <location>
        <begin position="76"/>
        <end position="79"/>
    </location>
</feature>
<feature type="sequence conflict" description="In Ref. 1; AAB04631." evidence="4" ref="1">
    <original>IFLALA</original>
    <variation>SFWPW</variation>
    <location>
        <begin position="14"/>
        <end position="19"/>
    </location>
</feature>
<feature type="sequence conflict" description="In Ref. 1; AAB04631." evidence="4" ref="1">
    <original>M</original>
    <variation>L</variation>
    <location>
        <position position="112"/>
    </location>
</feature>
<protein>
    <recommendedName>
        <fullName>Thiol:disulfide interchange protein DsbE</fullName>
    </recommendedName>
    <alternativeName>
        <fullName>Cytochrome c biogenesis protein CcmG</fullName>
    </alternativeName>
</protein>
<reference key="1">
    <citation type="submission" date="1996-07" db="EMBL/GenBank/DDBJ databases">
        <title>Characterization of the ccmF and ccmG genes involved in c-type cytochrome biogenesis in Chromatium vinosum.</title>
        <authorList>
            <person name="Chen Y.L."/>
            <person name="Knaff D.B."/>
        </authorList>
    </citation>
    <scope>NUCLEOTIDE SEQUENCE [GENOMIC DNA]</scope>
</reference>
<reference key="2">
    <citation type="journal article" date="2011" name="Stand. Genomic Sci.">
        <title>Complete genome sequence of Allochromatium vinosum DSM 180(T).</title>
        <authorList>
            <person name="Weissgerber T."/>
            <person name="Zigann R."/>
            <person name="Bruce D."/>
            <person name="Chang Y.J."/>
            <person name="Detter J.C."/>
            <person name="Han C."/>
            <person name="Hauser L."/>
            <person name="Jeffries C.D."/>
            <person name="Land M."/>
            <person name="Munk A.C."/>
            <person name="Tapia R."/>
            <person name="Dahl C."/>
        </authorList>
    </citation>
    <scope>NUCLEOTIDE SEQUENCE [LARGE SCALE GENOMIC DNA]</scope>
    <source>
        <strain>ATCC 17899 / DSM 180 / NBRC 103801 / NCIMB 10441 / D</strain>
    </source>
</reference>
<organism>
    <name type="scientific">Allochromatium vinosum (strain ATCC 17899 / DSM 180 / NBRC 103801 / NCIMB 10441 / D)</name>
    <name type="common">Chromatium vinosum</name>
    <dbReference type="NCBI Taxonomy" id="572477"/>
    <lineage>
        <taxon>Bacteria</taxon>
        <taxon>Pseudomonadati</taxon>
        <taxon>Pseudomonadota</taxon>
        <taxon>Gammaproteobacteria</taxon>
        <taxon>Chromatiales</taxon>
        <taxon>Chromatiaceae</taxon>
        <taxon>Allochromatium</taxon>
    </lineage>
</organism>
<dbReference type="EMBL" id="L78437">
    <property type="protein sequence ID" value="AAB04631.1"/>
    <property type="status" value="ALT_SEQ"/>
    <property type="molecule type" value="Genomic_DNA"/>
</dbReference>
<dbReference type="EMBL" id="CP001896">
    <property type="protein sequence ID" value="ADC63101.1"/>
    <property type="molecule type" value="Genomic_DNA"/>
</dbReference>
<dbReference type="RefSeq" id="WP_012971373.1">
    <property type="nucleotide sequence ID" value="NC_013851.1"/>
</dbReference>
<dbReference type="SMR" id="Q46476"/>
<dbReference type="STRING" id="572477.Alvin_2180"/>
<dbReference type="KEGG" id="alv:Alvin_2180"/>
<dbReference type="eggNOG" id="COG0526">
    <property type="taxonomic scope" value="Bacteria"/>
</dbReference>
<dbReference type="HOGENOM" id="CLU_042529_19_1_6"/>
<dbReference type="OrthoDB" id="9788279at2"/>
<dbReference type="Proteomes" id="UP000001441">
    <property type="component" value="Chromosome"/>
</dbReference>
<dbReference type="GO" id="GO:0030288">
    <property type="term" value="C:outer membrane-bounded periplasmic space"/>
    <property type="evidence" value="ECO:0007669"/>
    <property type="project" value="InterPro"/>
</dbReference>
<dbReference type="GO" id="GO:0005886">
    <property type="term" value="C:plasma membrane"/>
    <property type="evidence" value="ECO:0007669"/>
    <property type="project" value="UniProtKB-SubCell"/>
</dbReference>
<dbReference type="GO" id="GO:0015036">
    <property type="term" value="F:disulfide oxidoreductase activity"/>
    <property type="evidence" value="ECO:0007669"/>
    <property type="project" value="InterPro"/>
</dbReference>
<dbReference type="GO" id="GO:0017004">
    <property type="term" value="P:cytochrome complex assembly"/>
    <property type="evidence" value="ECO:0007669"/>
    <property type="project" value="UniProtKB-KW"/>
</dbReference>
<dbReference type="CDD" id="cd03010">
    <property type="entry name" value="TlpA_like_DsbE"/>
    <property type="match status" value="1"/>
</dbReference>
<dbReference type="Gene3D" id="3.40.30.10">
    <property type="entry name" value="Glutaredoxin"/>
    <property type="match status" value="1"/>
</dbReference>
<dbReference type="InterPro" id="IPR004799">
    <property type="entry name" value="Periplasmic_diS_OxRdtase_DsbE"/>
</dbReference>
<dbReference type="InterPro" id="IPR013740">
    <property type="entry name" value="Redoxin"/>
</dbReference>
<dbReference type="InterPro" id="IPR036249">
    <property type="entry name" value="Thioredoxin-like_sf"/>
</dbReference>
<dbReference type="InterPro" id="IPR017937">
    <property type="entry name" value="Thioredoxin_CS"/>
</dbReference>
<dbReference type="InterPro" id="IPR013766">
    <property type="entry name" value="Thioredoxin_domain"/>
</dbReference>
<dbReference type="InterPro" id="IPR050553">
    <property type="entry name" value="Thioredoxin_ResA/DsbE_sf"/>
</dbReference>
<dbReference type="NCBIfam" id="TIGR00385">
    <property type="entry name" value="dsbE"/>
    <property type="match status" value="1"/>
</dbReference>
<dbReference type="PANTHER" id="PTHR42852">
    <property type="entry name" value="THIOL:DISULFIDE INTERCHANGE PROTEIN DSBE"/>
    <property type="match status" value="1"/>
</dbReference>
<dbReference type="PANTHER" id="PTHR42852:SF6">
    <property type="entry name" value="THIOL:DISULFIDE INTERCHANGE PROTEIN DSBE"/>
    <property type="match status" value="1"/>
</dbReference>
<dbReference type="Pfam" id="PF08534">
    <property type="entry name" value="Redoxin"/>
    <property type="match status" value="1"/>
</dbReference>
<dbReference type="SUPFAM" id="SSF52833">
    <property type="entry name" value="Thioredoxin-like"/>
    <property type="match status" value="1"/>
</dbReference>
<dbReference type="PROSITE" id="PS00194">
    <property type="entry name" value="THIOREDOXIN_1"/>
    <property type="match status" value="1"/>
</dbReference>
<dbReference type="PROSITE" id="PS51352">
    <property type="entry name" value="THIOREDOXIN_2"/>
    <property type="match status" value="1"/>
</dbReference>
<comment type="function">
    <text evidence="1">Involved in disulfide bond formation. Catalyzes a late, reductive step in the assembly of periplasmic c-type cytochromes, probably the reduction of disulfide bonds of the apocytochrome c to allow covalent linkage with the heme. Possible subunit of a heme lyase (By similarity).</text>
</comment>
<comment type="subcellular location">
    <subcellularLocation>
        <location evidence="1">Cell inner membrane</location>
        <topology evidence="1">Single-pass membrane protein</topology>
        <orientation evidence="1">Periplasmic side</orientation>
    </subcellularLocation>
</comment>
<comment type="similarity">
    <text evidence="4">Belongs to the thioredoxin family. DsbE subfamily.</text>
</comment>
<comment type="sequence caution" evidence="4">
    <conflict type="erroneous termination">
        <sequence resource="EMBL-CDS" id="AAB04631"/>
    </conflict>
    <text>Truncated C-terminus.</text>
</comment>
<accession>Q46476</accession>
<accession>D3RVT8</accession>
<evidence type="ECO:0000250" key="1"/>
<evidence type="ECO:0000255" key="2"/>
<evidence type="ECO:0000255" key="3">
    <source>
        <dbReference type="PROSITE-ProRule" id="PRU00691"/>
    </source>
</evidence>
<evidence type="ECO:0000305" key="4"/>
<keyword id="KW-0997">Cell inner membrane</keyword>
<keyword id="KW-1003">Cell membrane</keyword>
<keyword id="KW-0201">Cytochrome c-type biogenesis</keyword>
<keyword id="KW-1015">Disulfide bond</keyword>
<keyword id="KW-0472">Membrane</keyword>
<keyword id="KW-0676">Redox-active center</keyword>
<keyword id="KW-1185">Reference proteome</keyword>
<keyword id="KW-0812">Transmembrane</keyword>
<keyword id="KW-1133">Transmembrane helix</keyword>